<evidence type="ECO:0000255" key="1">
    <source>
        <dbReference type="HAMAP-Rule" id="MF_00672"/>
    </source>
</evidence>
<gene>
    <name type="ordered locus">ASA_4118</name>
</gene>
<dbReference type="EMBL" id="CP000644">
    <property type="protein sequence ID" value="ABO92058.1"/>
    <property type="molecule type" value="Genomic_DNA"/>
</dbReference>
<dbReference type="RefSeq" id="WP_005319863.1">
    <property type="nucleotide sequence ID" value="NC_009348.1"/>
</dbReference>
<dbReference type="STRING" id="29491.GCA_000820065_03433"/>
<dbReference type="KEGG" id="asa:ASA_4118"/>
<dbReference type="eggNOG" id="COG1295">
    <property type="taxonomic scope" value="Bacteria"/>
</dbReference>
<dbReference type="HOGENOM" id="CLU_032288_0_0_6"/>
<dbReference type="Proteomes" id="UP000000225">
    <property type="component" value="Chromosome"/>
</dbReference>
<dbReference type="GO" id="GO:0005886">
    <property type="term" value="C:plasma membrane"/>
    <property type="evidence" value="ECO:0007669"/>
    <property type="project" value="UniProtKB-SubCell"/>
</dbReference>
<dbReference type="HAMAP" id="MF_00672">
    <property type="entry name" value="UPF0761"/>
    <property type="match status" value="1"/>
</dbReference>
<dbReference type="InterPro" id="IPR023679">
    <property type="entry name" value="UPF0761_bac"/>
</dbReference>
<dbReference type="InterPro" id="IPR017039">
    <property type="entry name" value="Virul_fac_BrkB"/>
</dbReference>
<dbReference type="NCBIfam" id="NF002457">
    <property type="entry name" value="PRK01637.1"/>
    <property type="match status" value="1"/>
</dbReference>
<dbReference type="NCBIfam" id="TIGR00765">
    <property type="entry name" value="yihY_not_rbn"/>
    <property type="match status" value="1"/>
</dbReference>
<dbReference type="PANTHER" id="PTHR30213">
    <property type="entry name" value="INNER MEMBRANE PROTEIN YHJD"/>
    <property type="match status" value="1"/>
</dbReference>
<dbReference type="PANTHER" id="PTHR30213:SF0">
    <property type="entry name" value="UPF0761 MEMBRANE PROTEIN YIHY"/>
    <property type="match status" value="1"/>
</dbReference>
<dbReference type="Pfam" id="PF03631">
    <property type="entry name" value="Virul_fac_BrkB"/>
    <property type="match status" value="1"/>
</dbReference>
<dbReference type="PIRSF" id="PIRSF035875">
    <property type="entry name" value="RNase_BN"/>
    <property type="match status" value="1"/>
</dbReference>
<protein>
    <recommendedName>
        <fullName evidence="1">UPF0761 membrane protein ASA_4118</fullName>
    </recommendedName>
</protein>
<sequence>MQQKFGGRLGHALSFLRHDGGHFAQFVWSRFQHDRLTVTAGYLAYVTLLSLVPMIAVVFGMMSAFPVFQTLKQAMEQFVYHNFVPTAGEMLKEYIDGFVANATNTTAVGIGALIVVALMLISAIDKNLNYIWRSTQGRPLAQAFAMYWMILTLGPVLIGGSIAISSYIFSLRLFGAESLFGIGYLLLRSLPFLFSVLTFLLVYTVVPNCKVRLVHAFIGALVAATLFELAKRGFAIYITNFPSYQAIYGALATIPVLFVWVYLSWLVVLLGAETTACLGEYEKPVSEELA</sequence>
<organism>
    <name type="scientific">Aeromonas salmonicida (strain A449)</name>
    <dbReference type="NCBI Taxonomy" id="382245"/>
    <lineage>
        <taxon>Bacteria</taxon>
        <taxon>Pseudomonadati</taxon>
        <taxon>Pseudomonadota</taxon>
        <taxon>Gammaproteobacteria</taxon>
        <taxon>Aeromonadales</taxon>
        <taxon>Aeromonadaceae</taxon>
        <taxon>Aeromonas</taxon>
    </lineage>
</organism>
<name>Y4118_AERS4</name>
<accession>A4ST36</accession>
<feature type="chain" id="PRO_0000391015" description="UPF0761 membrane protein ASA_4118">
    <location>
        <begin position="1"/>
        <end position="290"/>
    </location>
</feature>
<feature type="transmembrane region" description="Helical" evidence="1">
    <location>
        <begin position="48"/>
        <end position="68"/>
    </location>
</feature>
<feature type="transmembrane region" description="Helical" evidence="1">
    <location>
        <begin position="104"/>
        <end position="124"/>
    </location>
</feature>
<feature type="transmembrane region" description="Helical" evidence="1">
    <location>
        <begin position="144"/>
        <end position="164"/>
    </location>
</feature>
<feature type="transmembrane region" description="Helical" evidence="1">
    <location>
        <begin position="182"/>
        <end position="202"/>
    </location>
</feature>
<feature type="transmembrane region" description="Helical" evidence="1">
    <location>
        <begin position="216"/>
        <end position="236"/>
    </location>
</feature>
<feature type="transmembrane region" description="Helical" evidence="1">
    <location>
        <begin position="250"/>
        <end position="270"/>
    </location>
</feature>
<proteinExistence type="inferred from homology"/>
<keyword id="KW-0997">Cell inner membrane</keyword>
<keyword id="KW-1003">Cell membrane</keyword>
<keyword id="KW-0472">Membrane</keyword>
<keyword id="KW-0812">Transmembrane</keyword>
<keyword id="KW-1133">Transmembrane helix</keyword>
<reference key="1">
    <citation type="journal article" date="2008" name="BMC Genomics">
        <title>The genome of Aeromonas salmonicida subsp. salmonicida A449: insights into the evolution of a fish pathogen.</title>
        <authorList>
            <person name="Reith M.E."/>
            <person name="Singh R.K."/>
            <person name="Curtis B."/>
            <person name="Boyd J.M."/>
            <person name="Bouevitch A."/>
            <person name="Kimball J."/>
            <person name="Munholland J."/>
            <person name="Murphy C."/>
            <person name="Sarty D."/>
            <person name="Williams J."/>
            <person name="Nash J.H."/>
            <person name="Johnson S.C."/>
            <person name="Brown L.L."/>
        </authorList>
    </citation>
    <scope>NUCLEOTIDE SEQUENCE [LARGE SCALE GENOMIC DNA]</scope>
    <source>
        <strain>A449</strain>
    </source>
</reference>
<comment type="subcellular location">
    <subcellularLocation>
        <location evidence="1">Cell inner membrane</location>
        <topology evidence="1">Multi-pass membrane protein</topology>
    </subcellularLocation>
</comment>
<comment type="similarity">
    <text evidence="1">Belongs to the UPF0761 family.</text>
</comment>